<reference key="1">
    <citation type="journal article" date="2013" name="Nature">
        <title>The zebrafish reference genome sequence and its relationship to the human genome.</title>
        <authorList>
            <person name="Howe K."/>
            <person name="Clark M.D."/>
            <person name="Torroja C.F."/>
            <person name="Torrance J."/>
            <person name="Berthelot C."/>
            <person name="Muffato M."/>
            <person name="Collins J.E."/>
            <person name="Humphray S."/>
            <person name="McLaren K."/>
            <person name="Matthews L."/>
            <person name="McLaren S."/>
            <person name="Sealy I."/>
            <person name="Caccamo M."/>
            <person name="Churcher C."/>
            <person name="Scott C."/>
            <person name="Barrett J.C."/>
            <person name="Koch R."/>
            <person name="Rauch G.J."/>
            <person name="White S."/>
            <person name="Chow W."/>
            <person name="Kilian B."/>
            <person name="Quintais L.T."/>
            <person name="Guerra-Assuncao J.A."/>
            <person name="Zhou Y."/>
            <person name="Gu Y."/>
            <person name="Yen J."/>
            <person name="Vogel J.H."/>
            <person name="Eyre T."/>
            <person name="Redmond S."/>
            <person name="Banerjee R."/>
            <person name="Chi J."/>
            <person name="Fu B."/>
            <person name="Langley E."/>
            <person name="Maguire S.F."/>
            <person name="Laird G.K."/>
            <person name="Lloyd D."/>
            <person name="Kenyon E."/>
            <person name="Donaldson S."/>
            <person name="Sehra H."/>
            <person name="Almeida-King J."/>
            <person name="Loveland J."/>
            <person name="Trevanion S."/>
            <person name="Jones M."/>
            <person name="Quail M."/>
            <person name="Willey D."/>
            <person name="Hunt A."/>
            <person name="Burton J."/>
            <person name="Sims S."/>
            <person name="McLay K."/>
            <person name="Plumb B."/>
            <person name="Davis J."/>
            <person name="Clee C."/>
            <person name="Oliver K."/>
            <person name="Clark R."/>
            <person name="Riddle C."/>
            <person name="Elliot D."/>
            <person name="Threadgold G."/>
            <person name="Harden G."/>
            <person name="Ware D."/>
            <person name="Begum S."/>
            <person name="Mortimore B."/>
            <person name="Kerry G."/>
            <person name="Heath P."/>
            <person name="Phillimore B."/>
            <person name="Tracey A."/>
            <person name="Corby N."/>
            <person name="Dunn M."/>
            <person name="Johnson C."/>
            <person name="Wood J."/>
            <person name="Clark S."/>
            <person name="Pelan S."/>
            <person name="Griffiths G."/>
            <person name="Smith M."/>
            <person name="Glithero R."/>
            <person name="Howden P."/>
            <person name="Barker N."/>
            <person name="Lloyd C."/>
            <person name="Stevens C."/>
            <person name="Harley J."/>
            <person name="Holt K."/>
            <person name="Panagiotidis G."/>
            <person name="Lovell J."/>
            <person name="Beasley H."/>
            <person name="Henderson C."/>
            <person name="Gordon D."/>
            <person name="Auger K."/>
            <person name="Wright D."/>
            <person name="Collins J."/>
            <person name="Raisen C."/>
            <person name="Dyer L."/>
            <person name="Leung K."/>
            <person name="Robertson L."/>
            <person name="Ambridge K."/>
            <person name="Leongamornlert D."/>
            <person name="McGuire S."/>
            <person name="Gilderthorp R."/>
            <person name="Griffiths C."/>
            <person name="Manthravadi D."/>
            <person name="Nichol S."/>
            <person name="Barker G."/>
            <person name="Whitehead S."/>
            <person name="Kay M."/>
            <person name="Brown J."/>
            <person name="Murnane C."/>
            <person name="Gray E."/>
            <person name="Humphries M."/>
            <person name="Sycamore N."/>
            <person name="Barker D."/>
            <person name="Saunders D."/>
            <person name="Wallis J."/>
            <person name="Babbage A."/>
            <person name="Hammond S."/>
            <person name="Mashreghi-Mohammadi M."/>
            <person name="Barr L."/>
            <person name="Martin S."/>
            <person name="Wray P."/>
            <person name="Ellington A."/>
            <person name="Matthews N."/>
            <person name="Ellwood M."/>
            <person name="Woodmansey R."/>
            <person name="Clark G."/>
            <person name="Cooper J."/>
            <person name="Tromans A."/>
            <person name="Grafham D."/>
            <person name="Skuce C."/>
            <person name="Pandian R."/>
            <person name="Andrews R."/>
            <person name="Harrison E."/>
            <person name="Kimberley A."/>
            <person name="Garnett J."/>
            <person name="Fosker N."/>
            <person name="Hall R."/>
            <person name="Garner P."/>
            <person name="Kelly D."/>
            <person name="Bird C."/>
            <person name="Palmer S."/>
            <person name="Gehring I."/>
            <person name="Berger A."/>
            <person name="Dooley C.M."/>
            <person name="Ersan-Urun Z."/>
            <person name="Eser C."/>
            <person name="Geiger H."/>
            <person name="Geisler M."/>
            <person name="Karotki L."/>
            <person name="Kirn A."/>
            <person name="Konantz J."/>
            <person name="Konantz M."/>
            <person name="Oberlander M."/>
            <person name="Rudolph-Geiger S."/>
            <person name="Teucke M."/>
            <person name="Lanz C."/>
            <person name="Raddatz G."/>
            <person name="Osoegawa K."/>
            <person name="Zhu B."/>
            <person name="Rapp A."/>
            <person name="Widaa S."/>
            <person name="Langford C."/>
            <person name="Yang F."/>
            <person name="Schuster S.C."/>
            <person name="Carter N.P."/>
            <person name="Harrow J."/>
            <person name="Ning Z."/>
            <person name="Herrero J."/>
            <person name="Searle S.M."/>
            <person name="Enright A."/>
            <person name="Geisler R."/>
            <person name="Plasterk R.H."/>
            <person name="Lee C."/>
            <person name="Westerfield M."/>
            <person name="de Jong P.J."/>
            <person name="Zon L.I."/>
            <person name="Postlethwait J.H."/>
            <person name="Nusslein-Volhard C."/>
            <person name="Hubbard T.J."/>
            <person name="Roest Crollius H."/>
            <person name="Rogers J."/>
            <person name="Stemple D.L."/>
        </authorList>
    </citation>
    <scope>NUCLEOTIDE SEQUENCE [LARGE SCALE GENOMIC DNA]</scope>
    <source>
        <strain>Tuebingen</strain>
    </source>
</reference>
<reference key="2">
    <citation type="submission" date="2004-07" db="EMBL/GenBank/DDBJ databases">
        <authorList>
            <consortium name="NIH - Zebrafish Gene Collection (ZGC) project"/>
        </authorList>
    </citation>
    <scope>NUCLEOTIDE SEQUENCE [LARGE SCALE MRNA]</scope>
    <source>
        <tissue>Eye</tissue>
    </source>
</reference>
<reference key="3">
    <citation type="journal article" date="2016" name="PLoS Biol.">
        <title>Elongation factor Tu prevents misediting of Gly-tRNA(Gly) caused by the design behind the chiral proofreading site of D-aminoacyl-tRNA deacylase.</title>
        <authorList>
            <person name="Routh S.B."/>
            <person name="Pawar K.I."/>
            <person name="Ahmad S."/>
            <person name="Singh S."/>
            <person name="Suma K."/>
            <person name="Kumar M."/>
            <person name="Kuncha S.K."/>
            <person name="Yadav K."/>
            <person name="Kruparani S.P."/>
            <person name="Sankaranarayanan R."/>
        </authorList>
    </citation>
    <scope>FUNCTION</scope>
    <scope>SUBSTRATE SPECIFICITY</scope>
</reference>
<reference key="4">
    <citation type="journal article" date="2017" name="Elife">
        <title>Role of D-aminoacyl-tRNA deacylase beyond chiral proofreading as a cellular defense against glycine mischarging by AlaRS.</title>
        <authorList>
            <person name="Pawar K.I."/>
            <person name="Suma K."/>
            <person name="Seenivasan A."/>
            <person name="Kuncha S.K."/>
            <person name="Routh S.B."/>
            <person name="Kruparani S.P."/>
            <person name="Sankaranarayanan R."/>
        </authorList>
    </citation>
    <scope>FUNCTION</scope>
    <scope>CATALYTIC ACTIVITY</scope>
</reference>
<comment type="function">
    <text evidence="1 3 4">D-aminoacyl-tRNA deacylase, with no observable activity on tRNAs charged with their cognate L-amino acid (By similarity). Hydrolyzes correctly charged, achiral, glycyl-tRNA(Gly) (PubMed:27224426). Deacylates mischarged D.melanogaster and E.coli glycyl-tRNA(Ala), protecting cells against glycine mischarging by AlaRS (PubMed:28362257). Acts via tRNA-based rather than protein-based catalysis; rejects L-amino acids rather than detecting D-amino acids in the active site (By similarity). By recycling D-aminoacyl-tRNA to D-amino acids and free tRNA molecules, this enzyme counteracts the toxicity associated with the formation of D-aminoacyl-tRNA entities in vivo and helps enforce protein L-homochirality (By similarity).</text>
</comment>
<comment type="catalytic activity">
    <reaction evidence="4">
        <text>a D-aminoacyl-tRNA + H2O = a tRNA + a D-alpha-amino acid + H(+)</text>
        <dbReference type="Rhea" id="RHEA:13953"/>
        <dbReference type="Rhea" id="RHEA-COMP:10123"/>
        <dbReference type="Rhea" id="RHEA-COMP:10124"/>
        <dbReference type="ChEBI" id="CHEBI:15377"/>
        <dbReference type="ChEBI" id="CHEBI:15378"/>
        <dbReference type="ChEBI" id="CHEBI:59871"/>
        <dbReference type="ChEBI" id="CHEBI:78442"/>
        <dbReference type="ChEBI" id="CHEBI:79333"/>
        <dbReference type="EC" id="3.1.1.96"/>
    </reaction>
</comment>
<comment type="catalytic activity">
    <reaction evidence="4">
        <text>glycyl-tRNA(Ala) + H2O = tRNA(Ala) + glycine + H(+)</text>
        <dbReference type="Rhea" id="RHEA:53744"/>
        <dbReference type="Rhea" id="RHEA-COMP:9657"/>
        <dbReference type="Rhea" id="RHEA-COMP:13640"/>
        <dbReference type="ChEBI" id="CHEBI:15377"/>
        <dbReference type="ChEBI" id="CHEBI:15378"/>
        <dbReference type="ChEBI" id="CHEBI:57305"/>
        <dbReference type="ChEBI" id="CHEBI:78442"/>
        <dbReference type="ChEBI" id="CHEBI:78522"/>
        <dbReference type="EC" id="3.1.1.96"/>
    </reaction>
</comment>
<comment type="subunit">
    <text evidence="1">Homodimer.</text>
</comment>
<comment type="subcellular location">
    <subcellularLocation>
        <location evidence="1">Cytoplasm</location>
    </subcellularLocation>
</comment>
<comment type="domain">
    <text evidence="1">A Gly-cisPro motif from one monomer fits into the active site of the other monomer to allow specific chiral rejection of L-amino acids.</text>
</comment>
<comment type="similarity">
    <text evidence="7">Belongs to the DTD family.</text>
</comment>
<gene>
    <name evidence="8" type="primary">dtd1</name>
</gene>
<evidence type="ECO:0000250" key="1">
    <source>
        <dbReference type="UniProtKB" id="Q8IIS0"/>
    </source>
</evidence>
<evidence type="ECO:0000256" key="2">
    <source>
        <dbReference type="SAM" id="MobiDB-lite"/>
    </source>
</evidence>
<evidence type="ECO:0000269" key="3">
    <source>
    </source>
</evidence>
<evidence type="ECO:0000269" key="4">
    <source>
    </source>
</evidence>
<evidence type="ECO:0000303" key="5">
    <source>
    </source>
</evidence>
<evidence type="ECO:0000303" key="6">
    <source>
    </source>
</evidence>
<evidence type="ECO:0000305" key="7"/>
<evidence type="ECO:0000312" key="8">
    <source>
        <dbReference type="ZFIN" id="ZDB-GENE-040801-175"/>
    </source>
</evidence>
<dbReference type="EC" id="3.1.1.96" evidence="4"/>
<dbReference type="EMBL" id="AL929341">
    <property type="status" value="NOT_ANNOTATED_CDS"/>
    <property type="molecule type" value="Genomic_DNA"/>
</dbReference>
<dbReference type="EMBL" id="BC076141">
    <property type="protein sequence ID" value="AAH76141.1"/>
    <property type="molecule type" value="mRNA"/>
</dbReference>
<dbReference type="RefSeq" id="NP_001003440.1">
    <property type="nucleotide sequence ID" value="NM_001003440.1"/>
</dbReference>
<dbReference type="SMR" id="F1QGC8"/>
<dbReference type="FunCoup" id="F1QGC8">
    <property type="interactions" value="1039"/>
</dbReference>
<dbReference type="STRING" id="7955.ENSDARP00000065565"/>
<dbReference type="PaxDb" id="7955-ENSDARP00000065565"/>
<dbReference type="Ensembl" id="ENSDART00000065566">
    <property type="protein sequence ID" value="ENSDARP00000065565"/>
    <property type="gene ID" value="ENSDARG00000044628"/>
</dbReference>
<dbReference type="Ensembl" id="ENSDART00000189422">
    <property type="protein sequence ID" value="ENSDARP00000147742"/>
    <property type="gene ID" value="ENSDARG00000044628"/>
</dbReference>
<dbReference type="GeneID" id="445046"/>
<dbReference type="KEGG" id="dre:445046"/>
<dbReference type="AGR" id="ZFIN:ZDB-GENE-040801-175"/>
<dbReference type="CTD" id="92675"/>
<dbReference type="ZFIN" id="ZDB-GENE-040801-175">
    <property type="gene designation" value="dtd1"/>
</dbReference>
<dbReference type="eggNOG" id="KOG3323">
    <property type="taxonomic scope" value="Eukaryota"/>
</dbReference>
<dbReference type="HOGENOM" id="CLU_076901_0_0_1"/>
<dbReference type="InParanoid" id="F1QGC8"/>
<dbReference type="OMA" id="VFGADMK"/>
<dbReference type="OrthoDB" id="275783at2759"/>
<dbReference type="PhylomeDB" id="F1QGC8"/>
<dbReference type="TreeFam" id="TF314886"/>
<dbReference type="PRO" id="PR:F1QGC8"/>
<dbReference type="Proteomes" id="UP000000437">
    <property type="component" value="Chromosome 6"/>
</dbReference>
<dbReference type="Bgee" id="ENSDARG00000044628">
    <property type="expression patterns" value="Expressed in granulocyte and 21 other cell types or tissues"/>
</dbReference>
<dbReference type="GO" id="GO:0005737">
    <property type="term" value="C:cytoplasm"/>
    <property type="evidence" value="ECO:0000318"/>
    <property type="project" value="GO_Central"/>
</dbReference>
<dbReference type="GO" id="GO:0051500">
    <property type="term" value="F:D-tyrosyl-tRNA(Tyr) deacylase activity"/>
    <property type="evidence" value="ECO:0000318"/>
    <property type="project" value="GO_Central"/>
</dbReference>
<dbReference type="GO" id="GO:0106026">
    <property type="term" value="F:Gly-tRNA(Ala) deacylase activity"/>
    <property type="evidence" value="ECO:0000314"/>
    <property type="project" value="UniProtKB"/>
</dbReference>
<dbReference type="GO" id="GO:0000049">
    <property type="term" value="F:tRNA binding"/>
    <property type="evidence" value="ECO:0007669"/>
    <property type="project" value="UniProtKB-KW"/>
</dbReference>
<dbReference type="GO" id="GO:0006399">
    <property type="term" value="P:tRNA metabolic process"/>
    <property type="evidence" value="ECO:0000318"/>
    <property type="project" value="GO_Central"/>
</dbReference>
<dbReference type="CDD" id="cd00563">
    <property type="entry name" value="Dtyr_deacylase"/>
    <property type="match status" value="1"/>
</dbReference>
<dbReference type="FunFam" id="3.50.80.10:FF:000001">
    <property type="entry name" value="D-aminoacyl-tRNA deacylase"/>
    <property type="match status" value="1"/>
</dbReference>
<dbReference type="Gene3D" id="3.50.80.10">
    <property type="entry name" value="D-tyrosyl-tRNA(Tyr) deacylase"/>
    <property type="match status" value="1"/>
</dbReference>
<dbReference type="InterPro" id="IPR003732">
    <property type="entry name" value="Daa-tRNA_deacyls_DTD"/>
</dbReference>
<dbReference type="InterPro" id="IPR023509">
    <property type="entry name" value="DTD-like_sf"/>
</dbReference>
<dbReference type="NCBIfam" id="TIGR00256">
    <property type="entry name" value="D-aminoacyl-tRNA deacylase"/>
    <property type="match status" value="1"/>
</dbReference>
<dbReference type="PANTHER" id="PTHR10472:SF5">
    <property type="entry name" value="D-AMINOACYL-TRNA DEACYLASE 1"/>
    <property type="match status" value="1"/>
</dbReference>
<dbReference type="PANTHER" id="PTHR10472">
    <property type="entry name" value="D-TYROSYL-TRNA TYR DEACYLASE"/>
    <property type="match status" value="1"/>
</dbReference>
<dbReference type="Pfam" id="PF02580">
    <property type="entry name" value="Tyr_Deacylase"/>
    <property type="match status" value="1"/>
</dbReference>
<dbReference type="SUPFAM" id="SSF69500">
    <property type="entry name" value="DTD-like"/>
    <property type="match status" value="1"/>
</dbReference>
<name>DTD1_DANRE</name>
<proteinExistence type="evidence at protein level"/>
<sequence>MKAIIQRVTRASVTVGEEQISSIGRGLCVLLGISVEDTQKDVDYMVRKILNLRVFEDENGRAWSRSVMDGELEVLCVSQFTLQCLLKGNKPDYHAAMPAELAQPFYNNMLEQLRETYKPELIKDGQFGAKMQVLIQNDGPVTIQLESPPAPTDPKLLSKQEKQQQRKEKTRSKGPSDSSREKAAQRSKVDPSASSGAEGDVSSEREP</sequence>
<keyword id="KW-0963">Cytoplasm</keyword>
<keyword id="KW-0378">Hydrolase</keyword>
<keyword id="KW-1185">Reference proteome</keyword>
<keyword id="KW-0694">RNA-binding</keyword>
<keyword id="KW-0820">tRNA-binding</keyword>
<organism>
    <name type="scientific">Danio rerio</name>
    <name type="common">Zebrafish</name>
    <name type="synonym">Brachydanio rerio</name>
    <dbReference type="NCBI Taxonomy" id="7955"/>
    <lineage>
        <taxon>Eukaryota</taxon>
        <taxon>Metazoa</taxon>
        <taxon>Chordata</taxon>
        <taxon>Craniata</taxon>
        <taxon>Vertebrata</taxon>
        <taxon>Euteleostomi</taxon>
        <taxon>Actinopterygii</taxon>
        <taxon>Neopterygii</taxon>
        <taxon>Teleostei</taxon>
        <taxon>Ostariophysi</taxon>
        <taxon>Cypriniformes</taxon>
        <taxon>Danionidae</taxon>
        <taxon>Danioninae</taxon>
        <taxon>Danio</taxon>
    </lineage>
</organism>
<protein>
    <recommendedName>
        <fullName evidence="1">D-aminoacyl-tRNA deacylase 1</fullName>
        <ecNumber evidence="4">3.1.1.96</ecNumber>
    </recommendedName>
    <alternativeName>
        <fullName evidence="6">Gly-tRNA(Ala) deacylase 1</fullName>
    </alternativeName>
    <alternativeName>
        <fullName evidence="5">Gly-tRNA(Gly) deacylase 1</fullName>
    </alternativeName>
</protein>
<feature type="chain" id="PRO_0000441700" description="D-aminoacyl-tRNA deacylase 1">
    <location>
        <begin position="1"/>
        <end position="207"/>
    </location>
</feature>
<feature type="region of interest" description="Disordered" evidence="2">
    <location>
        <begin position="142"/>
        <end position="207"/>
    </location>
</feature>
<feature type="short sequence motif" description="Gly-cisPro motif, important for rejection of L-amino acids" evidence="1">
    <location>
        <begin position="139"/>
        <end position="140"/>
    </location>
</feature>
<feature type="compositionally biased region" description="Basic and acidic residues" evidence="2">
    <location>
        <begin position="156"/>
        <end position="167"/>
    </location>
</feature>
<feature type="compositionally biased region" description="Basic and acidic residues" evidence="2">
    <location>
        <begin position="178"/>
        <end position="189"/>
    </location>
</feature>
<feature type="sequence conflict" description="In Ref. 2; AAH76141." evidence="7" ref="2">
    <original>V</original>
    <variation>A</variation>
    <location>
        <position position="35"/>
    </location>
</feature>
<accession>F1QGC8</accession>
<accession>Q6DH41</accession>